<accession>A3M836</accession>
<evidence type="ECO:0000255" key="1">
    <source>
        <dbReference type="HAMAP-Rule" id="MF_00600"/>
    </source>
</evidence>
<sequence>MSAKDVKFGDSARSKMIAGVNVLADAVKVTLGPKGRNVVIDRSFGAPHITKDGVTVAKEISLKDKFENMGAQLVREVSSKTNDIAGDGTTTATVLAQAILNEGIKSVTAGMNPMDLKRGIDIAVKTVVENIRSIAKPADDFKAIEQVGSISANSDTTVGKLIAQAMEKVGKEGVITVEEGSGFEDALDVVEGMQFDRGYISPYFANKQDTLTAELENPFILLVDKKISNIRELISVLEAVAKTGKPLLIIAEDVEGEALATLVVNNMRGIIKVCAVKAPGFGDRRKAMLQDIAILTGATVISEEVGMSLEQATLQDLGTAHKITVSKENTVIVDGAGDAAAIAERVQQIRAQIEESTSEYDREKLQERVAKLAGGVAVIKIGAATEVEMKEKKDRVDDALHATRAAVEEGVVAGGGVALVRAVNALEGLKGANEDQTAGINILRRAIEAPLRQIVANAGDEPSVVINAVKNGEGNFGYNAATGEYGDMLEMGILDPAKVTRSALEHAASVAGLMLTTECMITDIPEDKPAAPDMGGMGGMGGMM</sequence>
<dbReference type="EC" id="5.6.1.7" evidence="1"/>
<dbReference type="EMBL" id="CP000521">
    <property type="protein sequence ID" value="ABO13080.2"/>
    <property type="molecule type" value="Genomic_DNA"/>
</dbReference>
<dbReference type="RefSeq" id="WP_001274623.1">
    <property type="nucleotide sequence ID" value="NZ_CP053098.1"/>
</dbReference>
<dbReference type="SMR" id="A3M836"/>
<dbReference type="GeneID" id="92894939"/>
<dbReference type="KEGG" id="acb:A1S_2664"/>
<dbReference type="HOGENOM" id="CLU_016503_3_0_6"/>
<dbReference type="GO" id="GO:0005737">
    <property type="term" value="C:cytoplasm"/>
    <property type="evidence" value="ECO:0007669"/>
    <property type="project" value="UniProtKB-SubCell"/>
</dbReference>
<dbReference type="GO" id="GO:0005524">
    <property type="term" value="F:ATP binding"/>
    <property type="evidence" value="ECO:0007669"/>
    <property type="project" value="UniProtKB-UniRule"/>
</dbReference>
<dbReference type="GO" id="GO:0140662">
    <property type="term" value="F:ATP-dependent protein folding chaperone"/>
    <property type="evidence" value="ECO:0007669"/>
    <property type="project" value="InterPro"/>
</dbReference>
<dbReference type="GO" id="GO:0016853">
    <property type="term" value="F:isomerase activity"/>
    <property type="evidence" value="ECO:0007669"/>
    <property type="project" value="UniProtKB-KW"/>
</dbReference>
<dbReference type="GO" id="GO:0051082">
    <property type="term" value="F:unfolded protein binding"/>
    <property type="evidence" value="ECO:0007669"/>
    <property type="project" value="UniProtKB-UniRule"/>
</dbReference>
<dbReference type="GO" id="GO:0042026">
    <property type="term" value="P:protein refolding"/>
    <property type="evidence" value="ECO:0007669"/>
    <property type="project" value="UniProtKB-UniRule"/>
</dbReference>
<dbReference type="CDD" id="cd03344">
    <property type="entry name" value="GroEL"/>
    <property type="match status" value="1"/>
</dbReference>
<dbReference type="FunFam" id="1.10.560.10:FF:000001">
    <property type="entry name" value="60 kDa chaperonin"/>
    <property type="match status" value="1"/>
</dbReference>
<dbReference type="FunFam" id="3.50.7.10:FF:000001">
    <property type="entry name" value="60 kDa chaperonin"/>
    <property type="match status" value="1"/>
</dbReference>
<dbReference type="Gene3D" id="3.50.7.10">
    <property type="entry name" value="GroEL"/>
    <property type="match status" value="1"/>
</dbReference>
<dbReference type="Gene3D" id="1.10.560.10">
    <property type="entry name" value="GroEL-like equatorial domain"/>
    <property type="match status" value="1"/>
</dbReference>
<dbReference type="Gene3D" id="3.30.260.10">
    <property type="entry name" value="TCP-1-like chaperonin intermediate domain"/>
    <property type="match status" value="1"/>
</dbReference>
<dbReference type="HAMAP" id="MF_00600">
    <property type="entry name" value="CH60"/>
    <property type="match status" value="1"/>
</dbReference>
<dbReference type="InterPro" id="IPR018370">
    <property type="entry name" value="Chaperonin_Cpn60_CS"/>
</dbReference>
<dbReference type="InterPro" id="IPR001844">
    <property type="entry name" value="Cpn60/GroEL"/>
</dbReference>
<dbReference type="InterPro" id="IPR002423">
    <property type="entry name" value="Cpn60/GroEL/TCP-1"/>
</dbReference>
<dbReference type="InterPro" id="IPR027409">
    <property type="entry name" value="GroEL-like_apical_dom_sf"/>
</dbReference>
<dbReference type="InterPro" id="IPR027413">
    <property type="entry name" value="GROEL-like_equatorial_sf"/>
</dbReference>
<dbReference type="InterPro" id="IPR027410">
    <property type="entry name" value="TCP-1-like_intermed_sf"/>
</dbReference>
<dbReference type="NCBIfam" id="TIGR02348">
    <property type="entry name" value="GroEL"/>
    <property type="match status" value="1"/>
</dbReference>
<dbReference type="NCBIfam" id="NF000592">
    <property type="entry name" value="PRK00013.1"/>
    <property type="match status" value="1"/>
</dbReference>
<dbReference type="NCBIfam" id="NF009487">
    <property type="entry name" value="PRK12849.1"/>
    <property type="match status" value="1"/>
</dbReference>
<dbReference type="NCBIfam" id="NF009488">
    <property type="entry name" value="PRK12850.1"/>
    <property type="match status" value="1"/>
</dbReference>
<dbReference type="NCBIfam" id="NF009489">
    <property type="entry name" value="PRK12851.1"/>
    <property type="match status" value="1"/>
</dbReference>
<dbReference type="PANTHER" id="PTHR45633">
    <property type="entry name" value="60 KDA HEAT SHOCK PROTEIN, MITOCHONDRIAL"/>
    <property type="match status" value="1"/>
</dbReference>
<dbReference type="Pfam" id="PF00118">
    <property type="entry name" value="Cpn60_TCP1"/>
    <property type="match status" value="1"/>
</dbReference>
<dbReference type="PRINTS" id="PR00298">
    <property type="entry name" value="CHAPERONIN60"/>
</dbReference>
<dbReference type="SUPFAM" id="SSF52029">
    <property type="entry name" value="GroEL apical domain-like"/>
    <property type="match status" value="1"/>
</dbReference>
<dbReference type="SUPFAM" id="SSF48592">
    <property type="entry name" value="GroEL equatorial domain-like"/>
    <property type="match status" value="1"/>
</dbReference>
<dbReference type="SUPFAM" id="SSF54849">
    <property type="entry name" value="GroEL-intermediate domain like"/>
    <property type="match status" value="1"/>
</dbReference>
<dbReference type="PROSITE" id="PS00296">
    <property type="entry name" value="CHAPERONINS_CPN60"/>
    <property type="match status" value="1"/>
</dbReference>
<name>CH60_ACIBT</name>
<keyword id="KW-0067">ATP-binding</keyword>
<keyword id="KW-0143">Chaperone</keyword>
<keyword id="KW-0963">Cytoplasm</keyword>
<keyword id="KW-0413">Isomerase</keyword>
<keyword id="KW-0547">Nucleotide-binding</keyword>
<protein>
    <recommendedName>
        <fullName evidence="1">Chaperonin GroEL</fullName>
        <ecNumber evidence="1">5.6.1.7</ecNumber>
    </recommendedName>
    <alternativeName>
        <fullName evidence="1">60 kDa chaperonin</fullName>
    </alternativeName>
    <alternativeName>
        <fullName evidence="1">Chaperonin-60</fullName>
        <shortName evidence="1">Cpn60</shortName>
    </alternativeName>
</protein>
<gene>
    <name evidence="1" type="primary">groEL</name>
    <name evidence="1" type="synonym">groL</name>
    <name type="ordered locus">A1S_2664</name>
</gene>
<reference key="1">
    <citation type="journal article" date="2007" name="Genes Dev.">
        <title>New insights into Acinetobacter baumannii pathogenesis revealed by high-density pyrosequencing and transposon mutagenesis.</title>
        <authorList>
            <person name="Smith M.G."/>
            <person name="Gianoulis T.A."/>
            <person name="Pukatzki S."/>
            <person name="Mekalanos J.J."/>
            <person name="Ornston L.N."/>
            <person name="Gerstein M."/>
            <person name="Snyder M."/>
        </authorList>
    </citation>
    <scope>NUCLEOTIDE SEQUENCE [LARGE SCALE GENOMIC DNA]</scope>
    <source>
        <strain>ATCC 17978 / DSM 105126 / CIP 53.77 / LMG 1025 / NCDC KC755 / 5377</strain>
    </source>
</reference>
<comment type="function">
    <text evidence="1">Together with its co-chaperonin GroES, plays an essential role in assisting protein folding. The GroEL-GroES system forms a nano-cage that allows encapsulation of the non-native substrate proteins and provides a physical environment optimized to promote and accelerate protein folding.</text>
</comment>
<comment type="catalytic activity">
    <reaction evidence="1">
        <text>ATP + H2O + a folded polypeptide = ADP + phosphate + an unfolded polypeptide.</text>
        <dbReference type="EC" id="5.6.1.7"/>
    </reaction>
</comment>
<comment type="subunit">
    <text evidence="1">Forms a cylinder of 14 subunits composed of two heptameric rings stacked back-to-back. Interacts with the co-chaperonin GroES.</text>
</comment>
<comment type="subcellular location">
    <subcellularLocation>
        <location evidence="1">Cytoplasm</location>
    </subcellularLocation>
</comment>
<comment type="similarity">
    <text evidence="1">Belongs to the chaperonin (HSP60) family.</text>
</comment>
<feature type="chain" id="PRO_1000129960" description="Chaperonin GroEL">
    <location>
        <begin position="1"/>
        <end position="544"/>
    </location>
</feature>
<feature type="binding site" evidence="1">
    <location>
        <begin position="30"/>
        <end position="33"/>
    </location>
    <ligand>
        <name>ATP</name>
        <dbReference type="ChEBI" id="CHEBI:30616"/>
    </ligand>
</feature>
<feature type="binding site" evidence="1">
    <location>
        <position position="51"/>
    </location>
    <ligand>
        <name>ATP</name>
        <dbReference type="ChEBI" id="CHEBI:30616"/>
    </ligand>
</feature>
<feature type="binding site" evidence="1">
    <location>
        <begin position="87"/>
        <end position="91"/>
    </location>
    <ligand>
        <name>ATP</name>
        <dbReference type="ChEBI" id="CHEBI:30616"/>
    </ligand>
</feature>
<feature type="binding site" evidence="1">
    <location>
        <position position="415"/>
    </location>
    <ligand>
        <name>ATP</name>
        <dbReference type="ChEBI" id="CHEBI:30616"/>
    </ligand>
</feature>
<feature type="binding site" evidence="1">
    <location>
        <begin position="479"/>
        <end position="481"/>
    </location>
    <ligand>
        <name>ATP</name>
        <dbReference type="ChEBI" id="CHEBI:30616"/>
    </ligand>
</feature>
<feature type="binding site" evidence="1">
    <location>
        <position position="495"/>
    </location>
    <ligand>
        <name>ATP</name>
        <dbReference type="ChEBI" id="CHEBI:30616"/>
    </ligand>
</feature>
<organism>
    <name type="scientific">Acinetobacter baumannii (strain ATCC 17978 / DSM 105126 / CIP 53.77 / LMG 1025 / NCDC KC755 / 5377)</name>
    <dbReference type="NCBI Taxonomy" id="400667"/>
    <lineage>
        <taxon>Bacteria</taxon>
        <taxon>Pseudomonadati</taxon>
        <taxon>Pseudomonadota</taxon>
        <taxon>Gammaproteobacteria</taxon>
        <taxon>Moraxellales</taxon>
        <taxon>Moraxellaceae</taxon>
        <taxon>Acinetobacter</taxon>
        <taxon>Acinetobacter calcoaceticus/baumannii complex</taxon>
    </lineage>
</organism>
<proteinExistence type="inferred from homology"/>